<evidence type="ECO:0000250" key="1"/>
<evidence type="ECO:0000250" key="2">
    <source>
        <dbReference type="UniProtKB" id="P26955"/>
    </source>
</evidence>
<evidence type="ECO:0000255" key="3"/>
<evidence type="ECO:0000255" key="4">
    <source>
        <dbReference type="PROSITE-ProRule" id="PRU00316"/>
    </source>
</evidence>
<evidence type="ECO:0000256" key="5">
    <source>
        <dbReference type="SAM" id="MobiDB-lite"/>
    </source>
</evidence>
<evidence type="ECO:0000269" key="6">
    <source>
    </source>
</evidence>
<evidence type="ECO:0000269" key="7">
    <source>
    </source>
</evidence>
<evidence type="ECO:0000269" key="8">
    <source>
    </source>
</evidence>
<evidence type="ECO:0000269" key="9">
    <source>
    </source>
</evidence>
<evidence type="ECO:0000269" key="10">
    <source>
    </source>
</evidence>
<evidence type="ECO:0000269" key="11">
    <source>
    </source>
</evidence>
<evidence type="ECO:0000303" key="12">
    <source>
    </source>
</evidence>
<evidence type="ECO:0000305" key="13"/>
<evidence type="ECO:0007829" key="14">
    <source>
        <dbReference type="PDB" id="1C8P"/>
    </source>
</evidence>
<evidence type="ECO:0007829" key="15">
    <source>
        <dbReference type="PDB" id="1EGJ"/>
    </source>
</evidence>
<evidence type="ECO:0007829" key="16">
    <source>
        <dbReference type="PDB" id="1GH7"/>
    </source>
</evidence>
<evidence type="ECO:0007829" key="17">
    <source>
        <dbReference type="PDB" id="2GYS"/>
    </source>
</evidence>
<evidence type="ECO:0007829" key="18">
    <source>
        <dbReference type="PDB" id="2NA8"/>
    </source>
</evidence>
<evidence type="ECO:0007829" key="19">
    <source>
        <dbReference type="PDB" id="4NKQ"/>
    </source>
</evidence>
<gene>
    <name type="primary">CSF2RB</name>
    <name type="synonym">IL3RB</name>
    <name type="synonym">IL5RB</name>
</gene>
<reference key="1">
    <citation type="journal article" date="1990" name="Proc. Natl. Acad. Sci. U.S.A.">
        <title>Molecular cloning of a second subunit of the receptor for human granulocyte-macrophage colony-stimulating factor (GM-CSF): reconstitution of a high-affinity GM-CSF receptor.</title>
        <authorList>
            <person name="Hayashida K."/>
            <person name="Kitamura T."/>
            <person name="Gorman D.M."/>
            <person name="Arai K."/>
            <person name="Yokota T."/>
            <person name="Miyajima A."/>
        </authorList>
    </citation>
    <scope>NUCLEOTIDE SEQUENCE [MRNA] (ISOFORM 1)</scope>
</reference>
<reference key="2">
    <citation type="submission" date="1991-02" db="EMBL/GenBank/DDBJ databases">
        <authorList>
            <person name="Kitamura T."/>
        </authorList>
    </citation>
    <scope>SEQUENCE REVISION TO 454</scope>
</reference>
<reference key="3">
    <citation type="journal article" date="2004" name="Genome Biol.">
        <title>A genome annotation-driven approach to cloning the human ORFeome.</title>
        <authorList>
            <person name="Collins J.E."/>
            <person name="Wright C.L."/>
            <person name="Edwards C.A."/>
            <person name="Davis M.P."/>
            <person name="Grinham J.A."/>
            <person name="Cole C.G."/>
            <person name="Goward M.E."/>
            <person name="Aguado B."/>
            <person name="Mallya M."/>
            <person name="Mokrab Y."/>
            <person name="Huckle E.J."/>
            <person name="Beare D.M."/>
            <person name="Dunham I."/>
        </authorList>
    </citation>
    <scope>NUCLEOTIDE SEQUENCE [LARGE SCALE MRNA] (ISOFORM 2)</scope>
</reference>
<reference key="4">
    <citation type="journal article" date="1999" name="Nature">
        <title>The DNA sequence of human chromosome 22.</title>
        <authorList>
            <person name="Dunham I."/>
            <person name="Hunt A.R."/>
            <person name="Collins J.E."/>
            <person name="Bruskiewich R."/>
            <person name="Beare D.M."/>
            <person name="Clamp M."/>
            <person name="Smink L.J."/>
            <person name="Ainscough R."/>
            <person name="Almeida J.P."/>
            <person name="Babbage A.K."/>
            <person name="Bagguley C."/>
            <person name="Bailey J."/>
            <person name="Barlow K.F."/>
            <person name="Bates K.N."/>
            <person name="Beasley O.P."/>
            <person name="Bird C.P."/>
            <person name="Blakey S.E."/>
            <person name="Bridgeman A.M."/>
            <person name="Buck D."/>
            <person name="Burgess J."/>
            <person name="Burrill W.D."/>
            <person name="Burton J."/>
            <person name="Carder C."/>
            <person name="Carter N.P."/>
            <person name="Chen Y."/>
            <person name="Clark G."/>
            <person name="Clegg S.M."/>
            <person name="Cobley V.E."/>
            <person name="Cole C.G."/>
            <person name="Collier R.E."/>
            <person name="Connor R."/>
            <person name="Conroy D."/>
            <person name="Corby N.R."/>
            <person name="Coville G.J."/>
            <person name="Cox A.V."/>
            <person name="Davis J."/>
            <person name="Dawson E."/>
            <person name="Dhami P.D."/>
            <person name="Dockree C."/>
            <person name="Dodsworth S.J."/>
            <person name="Durbin R.M."/>
            <person name="Ellington A.G."/>
            <person name="Evans K.L."/>
            <person name="Fey J.M."/>
            <person name="Fleming K."/>
            <person name="French L."/>
            <person name="Garner A.A."/>
            <person name="Gilbert J.G.R."/>
            <person name="Goward M.E."/>
            <person name="Grafham D.V."/>
            <person name="Griffiths M.N.D."/>
            <person name="Hall C."/>
            <person name="Hall R.E."/>
            <person name="Hall-Tamlyn G."/>
            <person name="Heathcott R.W."/>
            <person name="Ho S."/>
            <person name="Holmes S."/>
            <person name="Hunt S.E."/>
            <person name="Jones M.C."/>
            <person name="Kershaw J."/>
            <person name="Kimberley A.M."/>
            <person name="King A."/>
            <person name="Laird G.K."/>
            <person name="Langford C.F."/>
            <person name="Leversha M.A."/>
            <person name="Lloyd C."/>
            <person name="Lloyd D.M."/>
            <person name="Martyn I.D."/>
            <person name="Mashreghi-Mohammadi M."/>
            <person name="Matthews L.H."/>
            <person name="Mccann O.T."/>
            <person name="Mcclay J."/>
            <person name="Mclaren S."/>
            <person name="McMurray A.A."/>
            <person name="Milne S.A."/>
            <person name="Mortimore B.J."/>
            <person name="Odell C.N."/>
            <person name="Pavitt R."/>
            <person name="Pearce A.V."/>
            <person name="Pearson D."/>
            <person name="Phillimore B.J.C.T."/>
            <person name="Phillips S.H."/>
            <person name="Plumb R.W."/>
            <person name="Ramsay H."/>
            <person name="Ramsey Y."/>
            <person name="Rogers L."/>
            <person name="Ross M.T."/>
            <person name="Scott C.E."/>
            <person name="Sehra H.K."/>
            <person name="Skuce C.D."/>
            <person name="Smalley S."/>
            <person name="Smith M.L."/>
            <person name="Soderlund C."/>
            <person name="Spragon L."/>
            <person name="Steward C.A."/>
            <person name="Sulston J.E."/>
            <person name="Swann R.M."/>
            <person name="Vaudin M."/>
            <person name="Wall M."/>
            <person name="Wallis J.M."/>
            <person name="Whiteley M.N."/>
            <person name="Willey D.L."/>
            <person name="Williams L."/>
            <person name="Williams S.A."/>
            <person name="Williamson H."/>
            <person name="Wilmer T.E."/>
            <person name="Wilming L."/>
            <person name="Wright C.L."/>
            <person name="Hubbard T."/>
            <person name="Bentley D.R."/>
            <person name="Beck S."/>
            <person name="Rogers J."/>
            <person name="Shimizu N."/>
            <person name="Minoshima S."/>
            <person name="Kawasaki K."/>
            <person name="Sasaki T."/>
            <person name="Asakawa S."/>
            <person name="Kudoh J."/>
            <person name="Shintani A."/>
            <person name="Shibuya K."/>
            <person name="Yoshizaki Y."/>
            <person name="Aoki N."/>
            <person name="Mitsuyama S."/>
            <person name="Roe B.A."/>
            <person name="Chen F."/>
            <person name="Chu L."/>
            <person name="Crabtree J."/>
            <person name="Deschamps S."/>
            <person name="Do A."/>
            <person name="Do T."/>
            <person name="Dorman A."/>
            <person name="Fang F."/>
            <person name="Fu Y."/>
            <person name="Hu P."/>
            <person name="Hua A."/>
            <person name="Kenton S."/>
            <person name="Lai H."/>
            <person name="Lao H.I."/>
            <person name="Lewis J."/>
            <person name="Lewis S."/>
            <person name="Lin S.-P."/>
            <person name="Loh P."/>
            <person name="Malaj E."/>
            <person name="Nguyen T."/>
            <person name="Pan H."/>
            <person name="Phan S."/>
            <person name="Qi S."/>
            <person name="Qian Y."/>
            <person name="Ray L."/>
            <person name="Ren Q."/>
            <person name="Shaull S."/>
            <person name="Sloan D."/>
            <person name="Song L."/>
            <person name="Wang Q."/>
            <person name="Wang Y."/>
            <person name="Wang Z."/>
            <person name="White J."/>
            <person name="Willingham D."/>
            <person name="Wu H."/>
            <person name="Yao Z."/>
            <person name="Zhan M."/>
            <person name="Zhang G."/>
            <person name="Chissoe S."/>
            <person name="Murray J."/>
            <person name="Miller N."/>
            <person name="Minx P."/>
            <person name="Fulton R."/>
            <person name="Johnson D."/>
            <person name="Bemis G."/>
            <person name="Bentley D."/>
            <person name="Bradshaw H."/>
            <person name="Bourne S."/>
            <person name="Cordes M."/>
            <person name="Du Z."/>
            <person name="Fulton L."/>
            <person name="Goela D."/>
            <person name="Graves T."/>
            <person name="Hawkins J."/>
            <person name="Hinds K."/>
            <person name="Kemp K."/>
            <person name="Latreille P."/>
            <person name="Layman D."/>
            <person name="Ozersky P."/>
            <person name="Rohlfing T."/>
            <person name="Scheet P."/>
            <person name="Walker C."/>
            <person name="Wamsley A."/>
            <person name="Wohldmann P."/>
            <person name="Pepin K."/>
            <person name="Nelson J."/>
            <person name="Korf I."/>
            <person name="Bedell J.A."/>
            <person name="Hillier L.W."/>
            <person name="Mardis E."/>
            <person name="Waterston R."/>
            <person name="Wilson R."/>
            <person name="Emanuel B.S."/>
            <person name="Shaikh T."/>
            <person name="Kurahashi H."/>
            <person name="Saitta S."/>
            <person name="Budarf M.L."/>
            <person name="McDermid H.E."/>
            <person name="Johnson A."/>
            <person name="Wong A.C.C."/>
            <person name="Morrow B.E."/>
            <person name="Edelmann L."/>
            <person name="Kim U.J."/>
            <person name="Shizuya H."/>
            <person name="Simon M.I."/>
            <person name="Dumanski J.P."/>
            <person name="Peyrard M."/>
            <person name="Kedra D."/>
            <person name="Seroussi E."/>
            <person name="Fransson I."/>
            <person name="Tapia I."/>
            <person name="Bruder C.E."/>
            <person name="O'Brien K.P."/>
            <person name="Wilkinson P."/>
            <person name="Bodenteich A."/>
            <person name="Hartman K."/>
            <person name="Hu X."/>
            <person name="Khan A.S."/>
            <person name="Lane L."/>
            <person name="Tilahun Y."/>
            <person name="Wright H."/>
        </authorList>
    </citation>
    <scope>NUCLEOTIDE SEQUENCE [LARGE SCALE GENOMIC DNA]</scope>
</reference>
<reference key="5">
    <citation type="submission" date="2005-07" db="EMBL/GenBank/DDBJ databases">
        <authorList>
            <person name="Mural R.J."/>
            <person name="Istrail S."/>
            <person name="Sutton G.G."/>
            <person name="Florea L."/>
            <person name="Halpern A.L."/>
            <person name="Mobarry C.M."/>
            <person name="Lippert R."/>
            <person name="Walenz B."/>
            <person name="Shatkay H."/>
            <person name="Dew I."/>
            <person name="Miller J.R."/>
            <person name="Flanigan M.J."/>
            <person name="Edwards N.J."/>
            <person name="Bolanos R."/>
            <person name="Fasulo D."/>
            <person name="Halldorsson B.V."/>
            <person name="Hannenhalli S."/>
            <person name="Turner R."/>
            <person name="Yooseph S."/>
            <person name="Lu F."/>
            <person name="Nusskern D.R."/>
            <person name="Shue B.C."/>
            <person name="Zheng X.H."/>
            <person name="Zhong F."/>
            <person name="Delcher A.L."/>
            <person name="Huson D.H."/>
            <person name="Kravitz S.A."/>
            <person name="Mouchard L."/>
            <person name="Reinert K."/>
            <person name="Remington K.A."/>
            <person name="Clark A.G."/>
            <person name="Waterman M.S."/>
            <person name="Eichler E.E."/>
            <person name="Adams M.D."/>
            <person name="Hunkapiller M.W."/>
            <person name="Myers E.W."/>
            <person name="Venter J.C."/>
        </authorList>
    </citation>
    <scope>NUCLEOTIDE SEQUENCE [LARGE SCALE GENOMIC DNA]</scope>
</reference>
<reference key="6">
    <citation type="journal article" date="2008" name="Oncogene">
        <title>CBAP interacts with the un-liganded common beta-subunit of the GM-CSF/IL-3/IL-5 receptor and induces apoptosis via mitochondrial dysfunction.</title>
        <authorList>
            <person name="Kao C.J."/>
            <person name="Chiang Y.J."/>
            <person name="Chen P.H."/>
            <person name="Lin K.R."/>
            <person name="Hwang P.I."/>
            <person name="Yang-Yen H.F."/>
            <person name="Yen J.J."/>
        </authorList>
    </citation>
    <scope>INTERACTION WITH TMEM102</scope>
</reference>
<reference key="7">
    <citation type="journal article" date="2011" name="J. Med. Genet.">
        <title>Adult-onset hereditary pulmonary alveolar proteinosis caused by a single-base deletion in CSF2RB.</title>
        <authorList>
            <person name="Tanaka T."/>
            <person name="Motoi N."/>
            <person name="Tsuchihashi Y."/>
            <person name="Tazawa R."/>
            <person name="Kaneko C."/>
            <person name="Nei T."/>
            <person name="Yamamoto T."/>
            <person name="Hayashi T."/>
            <person name="Tagawa T."/>
            <person name="Nagayasu T."/>
            <person name="Kuribayashi F."/>
            <person name="Ariyoshi K."/>
            <person name="Nakata K."/>
            <person name="Morimoto K."/>
        </authorList>
    </citation>
    <scope>INVOLVEMENT IN SMDP5</scope>
</reference>
<reference key="8">
    <citation type="journal article" date="1992" name="Proc. Natl. Acad. Sci. U.S.A.">
        <title>Molecular basis of the membrane-anchored and two soluble isoforms of the human interleukin 5 receptor alpha subunit.</title>
        <authorList>
            <person name="Tavernier J."/>
            <person name="Tuypens T."/>
            <person name="Plaetinck G."/>
            <person name="Verhee A."/>
            <person name="Fiers W."/>
            <person name="Devos R."/>
        </authorList>
    </citation>
    <scope>FUNCTION</scope>
    <scope>INTERACTION WITH IL5 AND IL5RA</scope>
</reference>
<reference key="9">
    <citation type="journal article" date="1998" name="Blood">
        <title>JAK2 and JAK1 constitutively associate with an interleukin-5 (IL-5) receptor alpha and betac subunit, respectively, and are activated upon IL-5 stimulation.</title>
        <authorList>
            <person name="Ogata N."/>
            <person name="Kouro T."/>
            <person name="Yamada A."/>
            <person name="Koike M."/>
            <person name="Hanai N."/>
            <person name="Ishikawa T."/>
            <person name="Takatsu K."/>
        </authorList>
    </citation>
    <scope>FUNCTION</scope>
    <scope>INTERACTION WITH IL5RA AND JAK1</scope>
</reference>
<reference key="10">
    <citation type="journal article" date="2000" name="J. Mol. Biol.">
        <title>The solution structure of the cytokine-binding domain of the common beta-chain of the receptors for granulocyte-macrophage colony-stimulating factor, interleukin-3 and interleukin-5.</title>
        <authorList>
            <person name="Mulhern T.D."/>
            <person name="Lopez A.F."/>
            <person name="D'Andrea R.J."/>
            <person name="Gaunt C."/>
            <person name="Vandeleur L."/>
            <person name="Vadas M.A."/>
            <person name="Booker G.W."/>
            <person name="Bagley C.J."/>
        </authorList>
    </citation>
    <scope>STRUCTURE BY NMR OF 338-438</scope>
</reference>
<reference key="11">
    <citation type="journal article" date="2000" name="Blood">
        <title>Structure of the activation domain of the GM-CSF/IL-3/IL-5 receptor common beta-chain bound to an antagonist.</title>
        <authorList>
            <person name="Rossjohn J."/>
            <person name="McKinstry W.J."/>
            <person name="Woodcock J.M."/>
            <person name="McClure B.J."/>
            <person name="Hercus T.R."/>
            <person name="Parker M.W."/>
            <person name="Lopez A.F."/>
            <person name="Bagley C.J."/>
        </authorList>
    </citation>
    <scope>X-RAY CRYSTALLOGRAPHY (2.8 ANGSTROMS) OF 338-438</scope>
</reference>
<reference key="12">
    <citation type="journal article" date="2001" name="Cell">
        <title>Structure of the complete extracellular domain of the common beta subunit of the human GM-CSF, IL-3, and IL-5 receptors reveals a novel dimer configuration.</title>
        <authorList>
            <person name="Carr P.D."/>
            <person name="Gustin S.E."/>
            <person name="Church A.P."/>
            <person name="Murphy J.M."/>
            <person name="Ford S.C."/>
            <person name="Mann D.A."/>
            <person name="Woltring D.M."/>
            <person name="Walker I."/>
            <person name="Ollis D.L."/>
            <person name="Young I.G."/>
        </authorList>
    </citation>
    <scope>X-RAY CRYSTALLOGRAPHY (3.0 ANGSTROMS) OF 25-437</scope>
</reference>
<reference key="13">
    <citation type="journal article" date="2006" name="Acta Crystallogr. F">
        <title>An improved resolution structure of the human beta common receptor involved in IL-3, IL-5 and GM-CSF signalling which gives better definition of the high-affinity binding epitope.</title>
        <authorList>
            <person name="Carr P.D."/>
            <person name="Conlan F."/>
            <person name="Ford S."/>
            <person name="Ollis D.L."/>
            <person name="Young I.G."/>
        </authorList>
    </citation>
    <scope>X-RAY CRYSTALLOGRAPHY (2.7 ANGSTROMS) OF 25-443</scope>
    <scope>DISULFIDE BONDS</scope>
    <scope>SUBUNIT</scope>
    <scope>GLYCOSYLATION AT ASN-58 AND ASN-191</scope>
</reference>
<reference key="14">
    <citation type="journal article" date="2008" name="Cell">
        <title>The structure of the GM-CSF receptor complex reveals a distinct mode of cytokine receptor activation.</title>
        <authorList>
            <person name="Hansen G."/>
            <person name="Hercus T.R."/>
            <person name="McClure B.J."/>
            <person name="Stomski F.C."/>
            <person name="Dottore M."/>
            <person name="Powell J."/>
            <person name="Ramshaw H."/>
            <person name="Woodcock J.M."/>
            <person name="Xu Y."/>
            <person name="Guthridge M."/>
            <person name="McKinstry W.J."/>
            <person name="Lopez A.F."/>
            <person name="Parker M.W."/>
        </authorList>
    </citation>
    <scope>X-RAY CRYSTALLOGRAPHY (3.3 ANGSTROMS) OF 25-438 IN COMPLEX WITH CSF2RA AND CSF2</scope>
    <scope>SUBUNIT</scope>
    <scope>GLYCOSYLATION AT ASN-58 AND ASN-191</scope>
    <scope>DISULFIDE BONDS</scope>
</reference>
<reference key="15">
    <citation type="journal article" date="1997" name="J. Clin. Invest.">
        <title>Human pulmonary alveolar proteinosis associated with a defect in GM-CSF/IL-3/IL-5 receptor common beta chain expression.</title>
        <authorList>
            <person name="Dirksen U."/>
            <person name="Nishinakamura R."/>
            <person name="Groneck P."/>
            <person name="Hattenhorst U."/>
            <person name="Nogee L."/>
            <person name="Murray R."/>
            <person name="Burdach S."/>
        </authorList>
    </citation>
    <scope>VARIANT THR-603</scope>
</reference>
<keyword id="KW-0002">3D-structure</keyword>
<keyword id="KW-0025">Alternative splicing</keyword>
<keyword id="KW-1015">Disulfide bond</keyword>
<keyword id="KW-0325">Glycoprotein</keyword>
<keyword id="KW-0472">Membrane</keyword>
<keyword id="KW-0597">Phosphoprotein</keyword>
<keyword id="KW-1267">Proteomics identification</keyword>
<keyword id="KW-0675">Receptor</keyword>
<keyword id="KW-1185">Reference proteome</keyword>
<keyword id="KW-0677">Repeat</keyword>
<keyword id="KW-0732">Signal</keyword>
<keyword id="KW-0812">Transmembrane</keyword>
<keyword id="KW-1133">Transmembrane helix</keyword>
<organism>
    <name type="scientific">Homo sapiens</name>
    <name type="common">Human</name>
    <dbReference type="NCBI Taxonomy" id="9606"/>
    <lineage>
        <taxon>Eukaryota</taxon>
        <taxon>Metazoa</taxon>
        <taxon>Chordata</taxon>
        <taxon>Craniata</taxon>
        <taxon>Vertebrata</taxon>
        <taxon>Euteleostomi</taxon>
        <taxon>Mammalia</taxon>
        <taxon>Eutheria</taxon>
        <taxon>Euarchontoglires</taxon>
        <taxon>Primates</taxon>
        <taxon>Haplorrhini</taxon>
        <taxon>Catarrhini</taxon>
        <taxon>Hominidae</taxon>
        <taxon>Homo</taxon>
    </lineage>
</organism>
<protein>
    <recommendedName>
        <fullName>Cytokine receptor common subunit beta</fullName>
    </recommendedName>
    <alternativeName>
        <fullName>CDw131</fullName>
    </alternativeName>
    <alternativeName>
        <fullName>GM-CSF/IL-3/IL-5 receptor common beta subunit</fullName>
    </alternativeName>
    <cdAntigenName>CD131</cdAntigenName>
</protein>
<accession>P32927</accession>
<accession>Q5JZI1</accession>
<accession>Q6ICE0</accession>
<sequence length="897" mass="97336">MVLAQGLLSMALLALCWERSLAGAEETIPLQTLRCYNDYTSHITCRWADTQDAQRLVNVTLIRRVNEDLLEPVSCDLSDDMPWSACPHPRCVPRRCVIPCQSFVVTDVDYFSFQPDRPLGTRLTVTLTQHVQPPEPRDLQISTDQDHFLLTWSVALGSPQSHWLSPGDLEFEVVYKRLQDSWEDAAILLSNTSQATLGPEHLMPSSTYVARVRTRLAPGSRLSGRPSKWSPEVCWDSQPGDEAQPQNLECFFDGAAVLSCSWEVRKEVASSVSFGLFYKPSPDAGEEECSPVLREGLGSLHTRHHCQIPVPDPATHGQYIVSVQPRRAEKHIKSSVNIQMAPPSLNVTKDGDSYSLRWETMKMRYEHIDHTFEIQYRKDTATWKDSKTETLQNAHSMALPALEPSTRYWARVRVRTSRTGYNGIWSEWSEARSWDTESVLPMWVLALIVIFLTIAVLLALRFCGIYGYRLRRKWEEKIPNPSKSHLFQNGSAELWPPGSMSAFTSGSPPHQGPWGSRFPELEGVFPVGFGDSEVSPLTIEDPKHVCDPPSGPDTTPAASDLPTEQPPSPQPGPPAASHTPEKQASSFDFNGPYLGPPHSRSLPDILGQPEPPQEGGSQKSPPPGSLEYLCLPAGGQVQLVPLAQAMGPGQAVEVERRPSQGAAGSPSLESGGGPAPPALGPRVGGQDQKDSPVAIPMSSGDTEDPGVASGYVSSADLVFTPNSGASSVSLVPSLGLPSDQTPSLCPGLASGPPGAPGPVKSGFEGYVELPPIEGRSPRSPRNNPVPPEAKSPVLNPGERPADVSPTSPQPEGLLVLQQVGDYCFLPGLGPGPLSLRSKPSSPGPGPEIKNLDQAFQVKKPPGQAVPQVPVIQLFKALKQQDYLSLPPWEVNKPGEVC</sequence>
<comment type="function">
    <text evidence="6 11">Cell surface receptor that plays a role in immune response and controls the production and differentiation of hematopoietic progenitor cells into lineage-restricted cells. Acts by forming an heterodimeric receptor through interaction with different partners such as IL3RA, IL5RA or CSF2RA (PubMed:1495999). In turn, participates in various signaling pathways including interleukin-3, interleukin-5 and granulocyte-macrophage colony-stimulating factor/CSF2 pathways. In unstimulated conditions, interacts constitutively with JAK1 and ligand binding leads to JAK1 stimulation and subsequent activation of the JAK-STAT pathway (PubMed:9516124).</text>
</comment>
<comment type="subunit">
    <text evidence="2 6 11">Heterodimer of an alpha and a beta subunit. The beta subunit is common to the IL3, IL5 and GM-CSF receptors (PubMed:1495999). The signaling GM-CSF receptor complex is a dodecamer of two head-to-head hexamers of two alpha, two beta, and two ligand subunits. Interacts with TMEM102; this interaction occurs preferentially in the absence of CSF2. Interacts with FCER1G; this interaction is direct. Interacts with LYN. Interacts with JAK1 (PubMed:9516124).</text>
</comment>
<comment type="interaction">
    <interactant intactId="EBI-1809771">
        <id>P32927</id>
    </interactant>
    <interactant intactId="EBI-1809826">
        <id>P04141</id>
        <label>CSF2</label>
    </interactant>
    <organismsDiffer>false</organismsDiffer>
    <experiments>2</experiments>
</comment>
<comment type="interaction">
    <interactant intactId="EBI-1809771">
        <id>P32927</id>
    </interactant>
    <interactant intactId="EBI-1811718">
        <id>P08700</id>
        <label>IL3</label>
    </interactant>
    <organismsDiffer>false</organismsDiffer>
    <experiments>2</experiments>
</comment>
<comment type="interaction">
    <interactant intactId="EBI-1809771">
        <id>P32927</id>
    </interactant>
    <interactant intactId="EBI-2435811">
        <id>P05113</id>
        <label>IL5</label>
    </interactant>
    <organismsDiffer>false</organismsDiffer>
    <experiments>2</experiments>
</comment>
<comment type="interaction">
    <interactant intactId="EBI-1809771">
        <id>P32927</id>
    </interactant>
    <interactant intactId="EBI-1759442">
        <id>Q01344</id>
        <label>IL5RA</label>
    </interactant>
    <organismsDiffer>false</organismsDiffer>
    <experiments>3</experiments>
</comment>
<comment type="interaction">
    <interactant intactId="EBI-1809771">
        <id>P32927</id>
    </interactant>
    <interactant intactId="EBI-703066">
        <id>P05556</id>
        <label>ITGB1</label>
    </interactant>
    <organismsDiffer>false</organismsDiffer>
    <experiments>5</experiments>
</comment>
<comment type="interaction">
    <interactant intactId="EBI-1809771">
        <id>P32927</id>
    </interactant>
    <interactant intactId="EBI-518647">
        <id>O60674</id>
        <label>JAK2</label>
    </interactant>
    <organismsDiffer>false</organismsDiffer>
    <experiments>4</experiments>
</comment>
<comment type="subcellular location">
    <subcellularLocation>
        <location>Membrane</location>
        <topology>Single-pass type I membrane protein</topology>
    </subcellularLocation>
</comment>
<comment type="alternative products">
    <event type="alternative splicing"/>
    <isoform>
        <id>P32927-1</id>
        <name>1</name>
        <sequence type="displayed"/>
    </isoform>
    <isoform>
        <id>P32927-2</id>
        <name>2</name>
        <sequence type="described" ref="VSP_032798"/>
    </isoform>
</comment>
<comment type="domain">
    <text>The WSXWS motif appears to be necessary for proper protein folding and thereby efficient intracellular transport and cell-surface receptor binding.</text>
</comment>
<comment type="domain">
    <text>The box 1 motif is required for JAK interaction and/or activation.</text>
</comment>
<comment type="PTM">
    <text evidence="1">May be phosphorylated by LYN.</text>
</comment>
<comment type="disease" evidence="9">
    <disease id="DI-03322">
        <name>Pulmonary surfactant metabolism dysfunction 5</name>
        <acronym>SMDP5</acronym>
        <description>A rare lung disorder due to impaired surfactant homeostasis. It is characterized by alveolar filling with floccular material that stains positive using the periodic acid-Schiff method and is derived from surfactant phospholipids and protein components. Excessive lipoproteins accumulation in the alveoli results in severe respiratory distress.</description>
        <dbReference type="MIM" id="614370"/>
    </disease>
    <text>The disease is caused by variants affecting the gene represented in this entry.</text>
</comment>
<comment type="similarity">
    <text evidence="13">Belongs to the type I cytokine receptor family. Type 4 subfamily.</text>
</comment>
<dbReference type="EMBL" id="M59941">
    <property type="protein sequence ID" value="AAA18171.1"/>
    <property type="molecule type" value="mRNA"/>
</dbReference>
<dbReference type="EMBL" id="CR456428">
    <property type="protein sequence ID" value="CAG30314.1"/>
    <property type="molecule type" value="mRNA"/>
</dbReference>
<dbReference type="EMBL" id="AL008637">
    <property type="status" value="NOT_ANNOTATED_CDS"/>
    <property type="molecule type" value="Genomic_DNA"/>
</dbReference>
<dbReference type="EMBL" id="AL133392">
    <property type="status" value="NOT_ANNOTATED_CDS"/>
    <property type="molecule type" value="Genomic_DNA"/>
</dbReference>
<dbReference type="EMBL" id="CH471095">
    <property type="protein sequence ID" value="EAW60125.1"/>
    <property type="molecule type" value="Genomic_DNA"/>
</dbReference>
<dbReference type="EMBL" id="CH471095">
    <property type="protein sequence ID" value="EAW60126.1"/>
    <property type="molecule type" value="Genomic_DNA"/>
</dbReference>
<dbReference type="CCDS" id="CCDS13936.1">
    <molecule id="P32927-1"/>
</dbReference>
<dbReference type="CCDS" id="CCDS93160.1">
    <molecule id="P32927-2"/>
</dbReference>
<dbReference type="PIR" id="A39255">
    <property type="entry name" value="A39255"/>
</dbReference>
<dbReference type="RefSeq" id="NP_000386.1">
    <molecule id="P32927-1"/>
    <property type="nucleotide sequence ID" value="NM_000395.3"/>
</dbReference>
<dbReference type="RefSeq" id="NP_001397756.1">
    <molecule id="P32927-2"/>
    <property type="nucleotide sequence ID" value="NM_001410827.1"/>
</dbReference>
<dbReference type="RefSeq" id="XP_005261397.1">
    <property type="nucleotide sequence ID" value="XM_005261340.3"/>
</dbReference>
<dbReference type="PDB" id="1C8P">
    <property type="method" value="NMR"/>
    <property type="chains" value="A=338-438"/>
</dbReference>
<dbReference type="PDB" id="1EGJ">
    <property type="method" value="X-ray"/>
    <property type="resolution" value="2.80 A"/>
    <property type="chains" value="A=338-438"/>
</dbReference>
<dbReference type="PDB" id="1GH7">
    <property type="method" value="X-ray"/>
    <property type="resolution" value="3.00 A"/>
    <property type="chains" value="A/B=25-437"/>
</dbReference>
<dbReference type="PDB" id="2GYS">
    <property type="method" value="X-ray"/>
    <property type="resolution" value="2.70 A"/>
    <property type="chains" value="A/B=25-437"/>
</dbReference>
<dbReference type="PDB" id="2NA8">
    <property type="method" value="NMR"/>
    <property type="chains" value="A=432-473"/>
</dbReference>
<dbReference type="PDB" id="2NA9">
    <property type="method" value="NMR"/>
    <property type="chains" value="A=432-473"/>
</dbReference>
<dbReference type="PDB" id="4NKQ">
    <property type="method" value="X-ray"/>
    <property type="resolution" value="3.30 A"/>
    <property type="chains" value="A=25-438"/>
</dbReference>
<dbReference type="PDB" id="5DWU">
    <property type="method" value="X-ray"/>
    <property type="resolution" value="3.97 A"/>
    <property type="chains" value="A=17-240, B=241-443"/>
</dbReference>
<dbReference type="PDB" id="8TLD">
    <property type="method" value="EM"/>
    <property type="resolution" value="3.60 A"/>
    <property type="chains" value="B/E=23-442"/>
</dbReference>
<dbReference type="PDBsum" id="1C8P"/>
<dbReference type="PDBsum" id="1EGJ"/>
<dbReference type="PDBsum" id="1GH7"/>
<dbReference type="PDBsum" id="2GYS"/>
<dbReference type="PDBsum" id="2NA8"/>
<dbReference type="PDBsum" id="2NA9"/>
<dbReference type="PDBsum" id="4NKQ"/>
<dbReference type="PDBsum" id="5DWU"/>
<dbReference type="PDBsum" id="8TLD"/>
<dbReference type="BMRB" id="P32927"/>
<dbReference type="EMDB" id="EMD-41367"/>
<dbReference type="EMDB" id="EMD-41368"/>
<dbReference type="EMDB" id="EMD-41369"/>
<dbReference type="SMR" id="P32927"/>
<dbReference type="BioGRID" id="107826">
    <property type="interactions" value="19"/>
</dbReference>
<dbReference type="ComplexPortal" id="CPX-506">
    <property type="entry name" value="Interleukin-5 receptor-ligand complex"/>
</dbReference>
<dbReference type="ComplexPortal" id="CPX-512">
    <property type="entry name" value="Granulocyte-macrophage colony-stimulating factor-receptor complex"/>
</dbReference>
<dbReference type="ComplexPortal" id="CPX-9224">
    <property type="entry name" value="Interleukin-3 receptor-ligand complex"/>
</dbReference>
<dbReference type="CORUM" id="P32927"/>
<dbReference type="DIP" id="DIP-127N"/>
<dbReference type="ELM" id="P32927"/>
<dbReference type="FunCoup" id="P32927">
    <property type="interactions" value="759"/>
</dbReference>
<dbReference type="IntAct" id="P32927">
    <property type="interactions" value="17"/>
</dbReference>
<dbReference type="MINT" id="P32927"/>
<dbReference type="STRING" id="9606.ENSP00000384053"/>
<dbReference type="ChEMBL" id="CHEMBL2364169"/>
<dbReference type="ChEMBL" id="CHEMBL4804252"/>
<dbReference type="DrugBank" id="DB05264">
    <property type="generic name" value="NPI 32101"/>
</dbReference>
<dbReference type="DrugBank" id="DB05943">
    <property type="generic name" value="Resatorvid"/>
</dbReference>
<dbReference type="DrugBank" id="DB00020">
    <property type="generic name" value="Sargramostim"/>
</dbReference>
<dbReference type="DrugCentral" id="P32927"/>
<dbReference type="GlyCosmos" id="P32927">
    <property type="glycosylation" value="3 sites, No reported glycans"/>
</dbReference>
<dbReference type="GlyGen" id="P32927">
    <property type="glycosylation" value="4 sites"/>
</dbReference>
<dbReference type="iPTMnet" id="P32927"/>
<dbReference type="PhosphoSitePlus" id="P32927"/>
<dbReference type="BioMuta" id="CSF2RB"/>
<dbReference type="DMDM" id="1345923"/>
<dbReference type="jPOST" id="P32927"/>
<dbReference type="MassIVE" id="P32927"/>
<dbReference type="PaxDb" id="9606-ENSP00000384053"/>
<dbReference type="PeptideAtlas" id="P32927"/>
<dbReference type="ProteomicsDB" id="54888">
    <molecule id="P32927-1"/>
</dbReference>
<dbReference type="ProteomicsDB" id="54889">
    <molecule id="P32927-2"/>
</dbReference>
<dbReference type="ABCD" id="P32927">
    <property type="antibodies" value="2 sequenced antibodies"/>
</dbReference>
<dbReference type="Antibodypedia" id="4136">
    <property type="antibodies" value="746 antibodies from 40 providers"/>
</dbReference>
<dbReference type="DNASU" id="1439"/>
<dbReference type="Ensembl" id="ENST00000403662.8">
    <molecule id="P32927-1"/>
    <property type="protein sequence ID" value="ENSP00000384053.3"/>
    <property type="gene ID" value="ENSG00000100368.15"/>
</dbReference>
<dbReference type="Ensembl" id="ENST00000406230.5">
    <molecule id="P32927-2"/>
    <property type="protein sequence ID" value="ENSP00000385271.1"/>
    <property type="gene ID" value="ENSG00000100368.15"/>
</dbReference>
<dbReference type="GeneID" id="1439"/>
<dbReference type="KEGG" id="hsa:1439"/>
<dbReference type="MANE-Select" id="ENST00000403662.8">
    <property type="protein sequence ID" value="ENSP00000384053.3"/>
    <property type="RefSeq nucleotide sequence ID" value="NM_000395.3"/>
    <property type="RefSeq protein sequence ID" value="NP_000386.1"/>
</dbReference>
<dbReference type="UCSC" id="uc003aqa.5">
    <molecule id="P32927-1"/>
    <property type="organism name" value="human"/>
</dbReference>
<dbReference type="AGR" id="HGNC:2436"/>
<dbReference type="CTD" id="1439"/>
<dbReference type="DisGeNET" id="1439"/>
<dbReference type="GeneCards" id="CSF2RB"/>
<dbReference type="HGNC" id="HGNC:2436">
    <property type="gene designation" value="CSF2RB"/>
</dbReference>
<dbReference type="HPA" id="ENSG00000100368">
    <property type="expression patterns" value="Tissue enhanced (bone marrow, lymphoid tissue)"/>
</dbReference>
<dbReference type="MalaCards" id="CSF2RB"/>
<dbReference type="MIM" id="138981">
    <property type="type" value="gene"/>
</dbReference>
<dbReference type="MIM" id="614370">
    <property type="type" value="phenotype"/>
</dbReference>
<dbReference type="neXtProt" id="NX_P32927"/>
<dbReference type="OpenTargets" id="ENSG00000100368"/>
<dbReference type="Orphanet" id="264675">
    <property type="disease" value="Hereditary pulmonary alveolar proteinosis"/>
</dbReference>
<dbReference type="PharmGKB" id="PA26939"/>
<dbReference type="VEuPathDB" id="HostDB:ENSG00000100368"/>
<dbReference type="eggNOG" id="ENOG502RP2T">
    <property type="taxonomic scope" value="Eukaryota"/>
</dbReference>
<dbReference type="GeneTree" id="ENSGT00510000048963"/>
<dbReference type="HOGENOM" id="CLU_015884_0_0_1"/>
<dbReference type="InParanoid" id="P32927"/>
<dbReference type="OMA" id="LRFCGMY"/>
<dbReference type="OrthoDB" id="8906725at2759"/>
<dbReference type="PAN-GO" id="P32927">
    <property type="GO annotations" value="4 GO annotations based on evolutionary models"/>
</dbReference>
<dbReference type="PhylomeDB" id="P32927"/>
<dbReference type="TreeFam" id="TF337996"/>
<dbReference type="PathwayCommons" id="P32927"/>
<dbReference type="Reactome" id="R-HSA-512988">
    <property type="pathway name" value="Interleukin-3, Interleukin-5 and GM-CSF signaling"/>
</dbReference>
<dbReference type="Reactome" id="R-HSA-5673001">
    <property type="pathway name" value="RAF/MAP kinase cascade"/>
</dbReference>
<dbReference type="Reactome" id="R-HSA-5683826">
    <property type="pathway name" value="Surfactant metabolism"/>
</dbReference>
<dbReference type="Reactome" id="R-HSA-5688849">
    <property type="pathway name" value="Defective CSF2RB causes SMDP5"/>
</dbReference>
<dbReference type="Reactome" id="R-HSA-5688890">
    <property type="pathway name" value="Defective CSF2RA causes SMDP4"/>
</dbReference>
<dbReference type="Reactome" id="R-HSA-912526">
    <property type="pathway name" value="Interleukin receptor SHC signaling"/>
</dbReference>
<dbReference type="SignaLink" id="P32927"/>
<dbReference type="SIGNOR" id="P32927"/>
<dbReference type="BioGRID-ORCS" id="1439">
    <property type="hits" value="14 hits in 1157 CRISPR screens"/>
</dbReference>
<dbReference type="ChiTaRS" id="CSF2RB">
    <property type="organism name" value="human"/>
</dbReference>
<dbReference type="EvolutionaryTrace" id="P32927"/>
<dbReference type="GenomeRNAi" id="1439"/>
<dbReference type="Pharos" id="P32927">
    <property type="development level" value="Tclin"/>
</dbReference>
<dbReference type="PRO" id="PR:P32927"/>
<dbReference type="Proteomes" id="UP000005640">
    <property type="component" value="Chromosome 22"/>
</dbReference>
<dbReference type="RNAct" id="P32927">
    <property type="molecule type" value="protein"/>
</dbReference>
<dbReference type="Bgee" id="ENSG00000100368">
    <property type="expression patterns" value="Expressed in blood and 152 other cell types or tissues"/>
</dbReference>
<dbReference type="ExpressionAtlas" id="P32927">
    <property type="expression patterns" value="baseline and differential"/>
</dbReference>
<dbReference type="GO" id="GO:0009897">
    <property type="term" value="C:external side of plasma membrane"/>
    <property type="evidence" value="ECO:0000318"/>
    <property type="project" value="GO_Central"/>
</dbReference>
<dbReference type="GO" id="GO:0030526">
    <property type="term" value="C:granulocyte macrophage colony-stimulating factor receptor complex"/>
    <property type="evidence" value="ECO:0000314"/>
    <property type="project" value="ComplexPortal"/>
</dbReference>
<dbReference type="GO" id="GO:0005886">
    <property type="term" value="C:plasma membrane"/>
    <property type="evidence" value="ECO:0000314"/>
    <property type="project" value="UniProt"/>
</dbReference>
<dbReference type="GO" id="GO:0015026">
    <property type="term" value="F:coreceptor activity"/>
    <property type="evidence" value="ECO:0000314"/>
    <property type="project" value="UniProt"/>
</dbReference>
<dbReference type="GO" id="GO:0004896">
    <property type="term" value="F:cytokine receptor activity"/>
    <property type="evidence" value="ECO:0000318"/>
    <property type="project" value="GO_Central"/>
</dbReference>
<dbReference type="GO" id="GO:0038023">
    <property type="term" value="F:signaling receptor activity"/>
    <property type="evidence" value="ECO:0000304"/>
    <property type="project" value="ProtInc"/>
</dbReference>
<dbReference type="GO" id="GO:0007259">
    <property type="term" value="P:cell surface receptor signaling pathway via JAK-STAT"/>
    <property type="evidence" value="ECO:0000314"/>
    <property type="project" value="ComplexPortal"/>
</dbReference>
<dbReference type="GO" id="GO:0036016">
    <property type="term" value="P:cellular response to interleukin-3"/>
    <property type="evidence" value="ECO:0007669"/>
    <property type="project" value="GOC"/>
</dbReference>
<dbReference type="GO" id="GO:0019221">
    <property type="term" value="P:cytokine-mediated signaling pathway"/>
    <property type="evidence" value="ECO:0000318"/>
    <property type="project" value="GO_Central"/>
</dbReference>
<dbReference type="GO" id="GO:0038157">
    <property type="term" value="P:granulocyte-macrophage colony-stimulating factor signaling pathway"/>
    <property type="evidence" value="ECO:0000314"/>
    <property type="project" value="ComplexPortal"/>
</dbReference>
<dbReference type="GO" id="GO:0016064">
    <property type="term" value="P:immunoglobulin mediated immune response"/>
    <property type="evidence" value="ECO:0000318"/>
    <property type="project" value="GO_Central"/>
</dbReference>
<dbReference type="GO" id="GO:0038156">
    <property type="term" value="P:interleukin-3-mediated signaling pathway"/>
    <property type="evidence" value="ECO:0000314"/>
    <property type="project" value="UniProt"/>
</dbReference>
<dbReference type="GO" id="GO:0038043">
    <property type="term" value="P:interleukin-5-mediated signaling pathway"/>
    <property type="evidence" value="ECO:0000314"/>
    <property type="project" value="UniProt"/>
</dbReference>
<dbReference type="GO" id="GO:0070665">
    <property type="term" value="P:positive regulation of leukocyte proliferation"/>
    <property type="evidence" value="ECO:0000314"/>
    <property type="project" value="ComplexPortal"/>
</dbReference>
<dbReference type="GO" id="GO:0007585">
    <property type="term" value="P:respiratory gaseous exchange by respiratory system"/>
    <property type="evidence" value="ECO:0000304"/>
    <property type="project" value="ProtInc"/>
</dbReference>
<dbReference type="GO" id="GO:0032496">
    <property type="term" value="P:response to lipopolysaccharide"/>
    <property type="evidence" value="ECO:0007669"/>
    <property type="project" value="Ensembl"/>
</dbReference>
<dbReference type="GO" id="GO:0007165">
    <property type="term" value="P:signal transduction"/>
    <property type="evidence" value="ECO:0000303"/>
    <property type="project" value="UniProtKB"/>
</dbReference>
<dbReference type="CDD" id="cd00063">
    <property type="entry name" value="FN3"/>
    <property type="match status" value="2"/>
</dbReference>
<dbReference type="FunFam" id="2.60.40.10:FF:001517">
    <property type="entry name" value="Cytokine receptor common subunit beta"/>
    <property type="match status" value="1"/>
</dbReference>
<dbReference type="FunFam" id="2.60.40.10:FF:001654">
    <property type="entry name" value="Cytokine receptor common subunit beta"/>
    <property type="match status" value="1"/>
</dbReference>
<dbReference type="FunFam" id="2.60.40.10:FF:001771">
    <property type="entry name" value="Cytokine receptor common subunit beta"/>
    <property type="match status" value="1"/>
</dbReference>
<dbReference type="FunFam" id="2.60.40.10:FF:001835">
    <property type="entry name" value="Cytokine receptor common subunit beta"/>
    <property type="match status" value="1"/>
</dbReference>
<dbReference type="Gene3D" id="2.60.40.10">
    <property type="entry name" value="Immunoglobulins"/>
    <property type="match status" value="4"/>
</dbReference>
<dbReference type="InterPro" id="IPR003961">
    <property type="entry name" value="FN3_dom"/>
</dbReference>
<dbReference type="InterPro" id="IPR036116">
    <property type="entry name" value="FN3_sf"/>
</dbReference>
<dbReference type="InterPro" id="IPR003531">
    <property type="entry name" value="Hempt_rcpt_S_F1_CS"/>
</dbReference>
<dbReference type="InterPro" id="IPR013783">
    <property type="entry name" value="Ig-like_fold"/>
</dbReference>
<dbReference type="InterPro" id="IPR011365">
    <property type="entry name" value="IL3_rcpt_beta"/>
</dbReference>
<dbReference type="InterPro" id="IPR048668">
    <property type="entry name" value="IL3RB_N"/>
</dbReference>
<dbReference type="PANTHER" id="PTHR23037">
    <property type="entry name" value="CYTOKINE RECEPTOR"/>
    <property type="match status" value="1"/>
</dbReference>
<dbReference type="PANTHER" id="PTHR23037:SF35">
    <property type="entry name" value="FIBRONECTIN TYPE-III DOMAIN-CONTAINING PROTEIN"/>
    <property type="match status" value="1"/>
</dbReference>
<dbReference type="Pfam" id="PF21460">
    <property type="entry name" value="IL3Rb_N"/>
    <property type="match status" value="1"/>
</dbReference>
<dbReference type="PIRSF" id="PIRSF001956">
    <property type="entry name" value="IL3R_beta_c"/>
    <property type="match status" value="1"/>
</dbReference>
<dbReference type="SMART" id="SM00060">
    <property type="entry name" value="FN3"/>
    <property type="match status" value="2"/>
</dbReference>
<dbReference type="SUPFAM" id="SSF49265">
    <property type="entry name" value="Fibronectin type III"/>
    <property type="match status" value="4"/>
</dbReference>
<dbReference type="PROSITE" id="PS50853">
    <property type="entry name" value="FN3"/>
    <property type="match status" value="2"/>
</dbReference>
<dbReference type="PROSITE" id="PS01355">
    <property type="entry name" value="HEMATOPO_REC_S_F1"/>
    <property type="match status" value="1"/>
</dbReference>
<proteinExistence type="evidence at protein level"/>
<name>IL3RB_HUMAN</name>
<feature type="signal peptide" evidence="3">
    <location>
        <begin position="1"/>
        <end position="16"/>
    </location>
</feature>
<feature type="chain" id="PRO_0000010862" description="Cytokine receptor common subunit beta">
    <location>
        <begin position="17"/>
        <end position="897"/>
    </location>
</feature>
<feature type="topological domain" description="Extracellular" evidence="3">
    <location>
        <begin position="17"/>
        <end position="443"/>
    </location>
</feature>
<feature type="transmembrane region" description="Helical" evidence="3">
    <location>
        <begin position="444"/>
        <end position="460"/>
    </location>
</feature>
<feature type="topological domain" description="Cytoplasmic" evidence="3">
    <location>
        <begin position="461"/>
        <end position="897"/>
    </location>
</feature>
<feature type="domain" description="Fibronectin type-III 1" evidence="4">
    <location>
        <begin position="133"/>
        <end position="240"/>
    </location>
</feature>
<feature type="domain" description="Fibronectin type-III 2" evidence="4">
    <location>
        <begin position="339"/>
        <end position="436"/>
    </location>
</feature>
<feature type="region of interest" description="Disordered" evidence="5">
    <location>
        <begin position="498"/>
        <end position="517"/>
    </location>
</feature>
<feature type="region of interest" description="Disordered" evidence="5">
    <location>
        <begin position="532"/>
        <end position="630"/>
    </location>
</feature>
<feature type="region of interest" description="Disordered" evidence="5">
    <location>
        <begin position="648"/>
        <end position="812"/>
    </location>
</feature>
<feature type="region of interest" description="Disordered" evidence="5">
    <location>
        <begin position="830"/>
        <end position="849"/>
    </location>
</feature>
<feature type="short sequence motif" description="WSXWS motif">
    <location>
        <begin position="425"/>
        <end position="429"/>
    </location>
</feature>
<feature type="short sequence motif" description="Box 1 motif">
    <location>
        <begin position="474"/>
        <end position="482"/>
    </location>
</feature>
<feature type="compositionally biased region" description="Pro residues" evidence="5">
    <location>
        <begin position="564"/>
        <end position="574"/>
    </location>
</feature>
<feature type="compositionally biased region" description="Low complexity" evidence="5">
    <location>
        <begin position="723"/>
        <end position="752"/>
    </location>
</feature>
<feature type="compositionally biased region" description="Low complexity" evidence="5">
    <location>
        <begin position="830"/>
        <end position="840"/>
    </location>
</feature>
<feature type="modified residue" description="Phosphotyrosine" evidence="2">
    <location>
        <position position="766"/>
    </location>
</feature>
<feature type="glycosylation site" description="N-linked (GlcNAc...) asparagine" evidence="7 8">
    <location>
        <position position="58"/>
    </location>
</feature>
<feature type="glycosylation site" description="N-linked (GlcNAc...) asparagine" evidence="7 8">
    <location>
        <position position="191"/>
    </location>
</feature>
<feature type="glycosylation site" description="N-linked (GlcNAc...) asparagine" evidence="3">
    <location>
        <position position="346"/>
    </location>
</feature>
<feature type="disulfide bond">
    <location>
        <begin position="35"/>
        <end position="45"/>
    </location>
</feature>
<feature type="disulfide bond">
    <location>
        <begin position="75"/>
        <end position="96"/>
    </location>
</feature>
<feature type="disulfide bond">
    <location>
        <begin position="86"/>
        <end position="91"/>
    </location>
</feature>
<feature type="disulfide bond">
    <location>
        <begin position="250"/>
        <end position="260"/>
    </location>
</feature>
<feature type="disulfide bond">
    <location>
        <begin position="289"/>
        <end position="306"/>
    </location>
</feature>
<feature type="splice variant" id="VSP_032798" description="In isoform 2." evidence="12">
    <original>G</original>
    <variation>GSAVLLR</variation>
    <location>
        <position position="285"/>
    </location>
</feature>
<feature type="sequence variant" id="VAR_042521" description="In dbSNP:rs16845.">
    <original>E</original>
    <variation>Q</variation>
    <location>
        <position position="249"/>
    </location>
</feature>
<feature type="sequence variant" id="VAR_014801" description="In dbSNP:rs1801122." evidence="10">
    <original>P</original>
    <variation>T</variation>
    <location>
        <position position="603"/>
    </location>
</feature>
<feature type="sequence variant" id="VAR_014802" description="In dbSNP:rs1801115.">
    <original>G</original>
    <variation>V</variation>
    <location>
        <position position="647"/>
    </location>
</feature>
<feature type="sequence variant" id="VAR_014803" description="In dbSNP:rs1801114.">
    <original>V</original>
    <variation>M</variation>
    <location>
        <position position="652"/>
    </location>
</feature>
<feature type="sequence variant" id="VAR_042522" description="In dbSNP:rs16997517.">
    <original>P</original>
    <variation>S</variation>
    <location>
        <position position="696"/>
    </location>
</feature>
<feature type="helix" evidence="17">
    <location>
        <begin position="28"/>
        <end position="32"/>
    </location>
</feature>
<feature type="strand" evidence="17">
    <location>
        <begin position="34"/>
        <end position="37"/>
    </location>
</feature>
<feature type="strand" evidence="17">
    <location>
        <begin position="39"/>
        <end position="50"/>
    </location>
</feature>
<feature type="helix" evidence="17">
    <location>
        <begin position="51"/>
        <end position="54"/>
    </location>
</feature>
<feature type="strand" evidence="17">
    <location>
        <begin position="59"/>
        <end position="66"/>
    </location>
</feature>
<feature type="strand" evidence="17">
    <location>
        <begin position="69"/>
        <end position="72"/>
    </location>
</feature>
<feature type="strand" evidence="17">
    <location>
        <begin position="75"/>
        <end position="77"/>
    </location>
</feature>
<feature type="strand" evidence="17">
    <location>
        <begin position="88"/>
        <end position="99"/>
    </location>
</feature>
<feature type="strand" evidence="17">
    <location>
        <begin position="108"/>
        <end position="117"/>
    </location>
</feature>
<feature type="strand" evidence="17">
    <location>
        <begin position="121"/>
        <end position="126"/>
    </location>
</feature>
<feature type="helix" evidence="17">
    <location>
        <begin position="127"/>
        <end position="129"/>
    </location>
</feature>
<feature type="strand" evidence="17">
    <location>
        <begin position="137"/>
        <end position="144"/>
    </location>
</feature>
<feature type="strand" evidence="17">
    <location>
        <begin position="147"/>
        <end position="153"/>
    </location>
</feature>
<feature type="strand" evidence="19">
    <location>
        <begin position="162"/>
        <end position="164"/>
    </location>
</feature>
<feature type="helix" evidence="17">
    <location>
        <begin position="166"/>
        <end position="168"/>
    </location>
</feature>
<feature type="strand" evidence="17">
    <location>
        <begin position="169"/>
        <end position="177"/>
    </location>
</feature>
<feature type="helix" evidence="16">
    <location>
        <begin position="182"/>
        <end position="184"/>
    </location>
</feature>
<feature type="strand" evidence="17">
    <location>
        <begin position="186"/>
        <end position="197"/>
    </location>
</feature>
<feature type="turn" evidence="17">
    <location>
        <begin position="199"/>
        <end position="201"/>
    </location>
</feature>
<feature type="strand" evidence="17">
    <location>
        <begin position="207"/>
        <end position="216"/>
    </location>
</feature>
<feature type="strand" evidence="16">
    <location>
        <begin position="218"/>
        <end position="221"/>
    </location>
</feature>
<feature type="strand" evidence="17">
    <location>
        <begin position="233"/>
        <end position="236"/>
    </location>
</feature>
<feature type="strand" evidence="17">
    <location>
        <begin position="246"/>
        <end position="252"/>
    </location>
</feature>
<feature type="strand" evidence="17">
    <location>
        <begin position="254"/>
        <end position="265"/>
    </location>
</feature>
<feature type="helix" evidence="17">
    <location>
        <begin position="266"/>
        <end position="269"/>
    </location>
</feature>
<feature type="strand" evidence="17">
    <location>
        <begin position="274"/>
        <end position="279"/>
    </location>
</feature>
<feature type="strand" evidence="17">
    <location>
        <begin position="292"/>
        <end position="295"/>
    </location>
</feature>
<feature type="turn" evidence="17">
    <location>
        <begin position="298"/>
        <end position="300"/>
    </location>
</feature>
<feature type="strand" evidence="17">
    <location>
        <begin position="301"/>
        <end position="309"/>
    </location>
</feature>
<feature type="turn" evidence="17">
    <location>
        <begin position="313"/>
        <end position="315"/>
    </location>
</feature>
<feature type="strand" evidence="17">
    <location>
        <begin position="318"/>
        <end position="325"/>
    </location>
</feature>
<feature type="strand" evidence="17">
    <location>
        <begin position="330"/>
        <end position="333"/>
    </location>
</feature>
<feature type="helix" evidence="17">
    <location>
        <begin position="334"/>
        <end position="336"/>
    </location>
</feature>
<feature type="strand" evidence="16">
    <location>
        <begin position="337"/>
        <end position="339"/>
    </location>
</feature>
<feature type="strand" evidence="17">
    <location>
        <begin position="344"/>
        <end position="348"/>
    </location>
</feature>
<feature type="strand" evidence="16">
    <location>
        <begin position="350"/>
        <end position="352"/>
    </location>
</feature>
<feature type="strand" evidence="17">
    <location>
        <begin position="355"/>
        <end position="359"/>
    </location>
</feature>
<feature type="strand" evidence="14">
    <location>
        <begin position="365"/>
        <end position="367"/>
    </location>
</feature>
<feature type="strand" evidence="17">
    <location>
        <begin position="370"/>
        <end position="377"/>
    </location>
</feature>
<feature type="strand" evidence="17">
    <location>
        <begin position="379"/>
        <end position="381"/>
    </location>
</feature>
<feature type="helix" evidence="16">
    <location>
        <begin position="383"/>
        <end position="385"/>
    </location>
</feature>
<feature type="strand" evidence="17">
    <location>
        <begin position="388"/>
        <end position="393"/>
    </location>
</feature>
<feature type="strand" evidence="17">
    <location>
        <begin position="395"/>
        <end position="398"/>
    </location>
</feature>
<feature type="strand" evidence="16">
    <location>
        <begin position="405"/>
        <end position="407"/>
    </location>
</feature>
<feature type="strand" evidence="17">
    <location>
        <begin position="409"/>
        <end position="416"/>
    </location>
</feature>
<feature type="strand" evidence="16">
    <location>
        <begin position="418"/>
        <end position="420"/>
    </location>
</feature>
<feature type="strand" evidence="15">
    <location>
        <begin position="432"/>
        <end position="436"/>
    </location>
</feature>
<feature type="helix" evidence="18">
    <location>
        <begin position="442"/>
        <end position="466"/>
    </location>
</feature>